<comment type="similarity">
    <text evidence="1">Belongs to the UPF0250 family.</text>
</comment>
<organism>
    <name type="scientific">Buchnera aphidicola subsp. Cinara cedri (strain Cc)</name>
    <dbReference type="NCBI Taxonomy" id="372461"/>
    <lineage>
        <taxon>Bacteria</taxon>
        <taxon>Pseudomonadati</taxon>
        <taxon>Pseudomonadota</taxon>
        <taxon>Gammaproteobacteria</taxon>
        <taxon>Enterobacterales</taxon>
        <taxon>Erwiniaceae</taxon>
        <taxon>Buchnera</taxon>
    </lineage>
</organism>
<name>Y707_BUCCC</name>
<accession>Q057D5</accession>
<gene>
    <name type="ordered locus">BCc_307</name>
</gene>
<evidence type="ECO:0000255" key="1">
    <source>
        <dbReference type="HAMAP-Rule" id="MF_00659"/>
    </source>
</evidence>
<protein>
    <recommendedName>
        <fullName evidence="1">UPF0250 protein BCc_307</fullName>
    </recommendedName>
</protein>
<proteinExistence type="inferred from homology"/>
<keyword id="KW-1185">Reference proteome</keyword>
<sequence>MTNKLKKMLKFPCTFTYKVIGLAQPELTNNIIKIIQNHIPGDYAPQIKSSNKGTYLSISITICAKNFKQIKNLYNELSKIHLVRMVL</sequence>
<dbReference type="EMBL" id="CP000263">
    <property type="protein sequence ID" value="ABJ90764.1"/>
    <property type="molecule type" value="Genomic_DNA"/>
</dbReference>
<dbReference type="RefSeq" id="WP_011672683.1">
    <property type="nucleotide sequence ID" value="NC_008513.1"/>
</dbReference>
<dbReference type="SMR" id="Q057D5"/>
<dbReference type="STRING" id="372461.BCc_307"/>
<dbReference type="KEGG" id="bcc:BCc_307"/>
<dbReference type="eggNOG" id="COG2921">
    <property type="taxonomic scope" value="Bacteria"/>
</dbReference>
<dbReference type="HOGENOM" id="CLU_161438_2_1_6"/>
<dbReference type="OrthoDB" id="9793424at2"/>
<dbReference type="Proteomes" id="UP000000669">
    <property type="component" value="Chromosome"/>
</dbReference>
<dbReference type="GO" id="GO:0005829">
    <property type="term" value="C:cytosol"/>
    <property type="evidence" value="ECO:0007669"/>
    <property type="project" value="TreeGrafter"/>
</dbReference>
<dbReference type="Gene3D" id="3.30.70.260">
    <property type="match status" value="1"/>
</dbReference>
<dbReference type="HAMAP" id="MF_00659">
    <property type="entry name" value="UPF0250"/>
    <property type="match status" value="1"/>
</dbReference>
<dbReference type="InterPro" id="IPR007454">
    <property type="entry name" value="UPF0250_YbeD-like"/>
</dbReference>
<dbReference type="InterPro" id="IPR027471">
    <property type="entry name" value="YbeD-like_sf"/>
</dbReference>
<dbReference type="NCBIfam" id="NF003447">
    <property type="entry name" value="PRK04998.1"/>
    <property type="match status" value="1"/>
</dbReference>
<dbReference type="PANTHER" id="PTHR38036">
    <property type="entry name" value="UPF0250 PROTEIN YBED"/>
    <property type="match status" value="1"/>
</dbReference>
<dbReference type="PANTHER" id="PTHR38036:SF1">
    <property type="entry name" value="UPF0250 PROTEIN YBED"/>
    <property type="match status" value="1"/>
</dbReference>
<dbReference type="Pfam" id="PF04359">
    <property type="entry name" value="DUF493"/>
    <property type="match status" value="1"/>
</dbReference>
<dbReference type="SUPFAM" id="SSF117991">
    <property type="entry name" value="YbeD/HP0495-like"/>
    <property type="match status" value="1"/>
</dbReference>
<feature type="chain" id="PRO_1000061859" description="UPF0250 protein BCc_307">
    <location>
        <begin position="1"/>
        <end position="87"/>
    </location>
</feature>
<reference key="1">
    <citation type="journal article" date="2006" name="Science">
        <title>A small microbial genome: the end of a long symbiotic relationship?</title>
        <authorList>
            <person name="Perez-Brocal V."/>
            <person name="Gil R."/>
            <person name="Ramos S."/>
            <person name="Lamelas A."/>
            <person name="Postigo M."/>
            <person name="Michelena J.M."/>
            <person name="Silva F.J."/>
            <person name="Moya A."/>
            <person name="Latorre A."/>
        </authorList>
    </citation>
    <scope>NUCLEOTIDE SEQUENCE [LARGE SCALE GENOMIC DNA]</scope>
    <source>
        <strain>Cc</strain>
    </source>
</reference>